<name>UREE_NOSS1</name>
<protein>
    <recommendedName>
        <fullName evidence="1">Urease accessory protein UreE</fullName>
    </recommendedName>
</protein>
<proteinExistence type="inferred from homology"/>
<accession>Q8YYW0</accession>
<sequence length="147" mass="16559">MLTLTQLVTPNPDVAITLTLFLTAEERCRSRHRFETEDGQVVFLRLPRGTLLQDGDILQDETNGNLIRIAAKPEPVLTAVAQTQLLLMRAAYHLGNRHVPVEITPTYLRLSPDTVLRTMLEHMGLEITAEILPFQPELGAYGHHHPH</sequence>
<feature type="chain" id="PRO_0000223398" description="Urease accessory protein UreE">
    <location>
        <begin position="1"/>
        <end position="147"/>
    </location>
</feature>
<organism>
    <name type="scientific">Nostoc sp. (strain PCC 7120 / SAG 25.82 / UTEX 2576)</name>
    <dbReference type="NCBI Taxonomy" id="103690"/>
    <lineage>
        <taxon>Bacteria</taxon>
        <taxon>Bacillati</taxon>
        <taxon>Cyanobacteriota</taxon>
        <taxon>Cyanophyceae</taxon>
        <taxon>Nostocales</taxon>
        <taxon>Nostocaceae</taxon>
        <taxon>Nostoc</taxon>
    </lineage>
</organism>
<dbReference type="EMBL" id="BA000019">
    <property type="protein sequence ID" value="BAB72690.1"/>
    <property type="molecule type" value="Genomic_DNA"/>
</dbReference>
<dbReference type="PIR" id="AC1898">
    <property type="entry name" value="AC1898"/>
</dbReference>
<dbReference type="RefSeq" id="WP_010994907.1">
    <property type="nucleotide sequence ID" value="NZ_RSCN01000006.1"/>
</dbReference>
<dbReference type="SMR" id="Q8YYW0"/>
<dbReference type="STRING" id="103690.gene:10492743"/>
<dbReference type="KEGG" id="ana:alr0733"/>
<dbReference type="eggNOG" id="COG2371">
    <property type="taxonomic scope" value="Bacteria"/>
</dbReference>
<dbReference type="OrthoDB" id="5421304at2"/>
<dbReference type="Proteomes" id="UP000002483">
    <property type="component" value="Chromosome"/>
</dbReference>
<dbReference type="GO" id="GO:0005737">
    <property type="term" value="C:cytoplasm"/>
    <property type="evidence" value="ECO:0007669"/>
    <property type="project" value="UniProtKB-SubCell"/>
</dbReference>
<dbReference type="GO" id="GO:0016151">
    <property type="term" value="F:nickel cation binding"/>
    <property type="evidence" value="ECO:0007669"/>
    <property type="project" value="UniProtKB-UniRule"/>
</dbReference>
<dbReference type="GO" id="GO:0051082">
    <property type="term" value="F:unfolded protein binding"/>
    <property type="evidence" value="ECO:0007669"/>
    <property type="project" value="UniProtKB-UniRule"/>
</dbReference>
<dbReference type="GO" id="GO:0006457">
    <property type="term" value="P:protein folding"/>
    <property type="evidence" value="ECO:0007669"/>
    <property type="project" value="InterPro"/>
</dbReference>
<dbReference type="GO" id="GO:0065003">
    <property type="term" value="P:protein-containing complex assembly"/>
    <property type="evidence" value="ECO:0007669"/>
    <property type="project" value="InterPro"/>
</dbReference>
<dbReference type="GO" id="GO:0019627">
    <property type="term" value="P:urea metabolic process"/>
    <property type="evidence" value="ECO:0007669"/>
    <property type="project" value="InterPro"/>
</dbReference>
<dbReference type="CDD" id="cd00571">
    <property type="entry name" value="UreE"/>
    <property type="match status" value="1"/>
</dbReference>
<dbReference type="Gene3D" id="2.60.260.20">
    <property type="entry name" value="Urease metallochaperone UreE, N-terminal domain"/>
    <property type="match status" value="1"/>
</dbReference>
<dbReference type="Gene3D" id="3.30.70.790">
    <property type="entry name" value="UreE, C-terminal domain"/>
    <property type="match status" value="1"/>
</dbReference>
<dbReference type="HAMAP" id="MF_00822">
    <property type="entry name" value="UreE"/>
    <property type="match status" value="1"/>
</dbReference>
<dbReference type="InterPro" id="IPR012406">
    <property type="entry name" value="UreE"/>
</dbReference>
<dbReference type="InterPro" id="IPR007864">
    <property type="entry name" value="UreE_C_dom"/>
</dbReference>
<dbReference type="InterPro" id="IPR004029">
    <property type="entry name" value="UreE_N"/>
</dbReference>
<dbReference type="InterPro" id="IPR036118">
    <property type="entry name" value="UreE_N_sf"/>
</dbReference>
<dbReference type="NCBIfam" id="NF009751">
    <property type="entry name" value="PRK13261.1-1"/>
    <property type="match status" value="1"/>
</dbReference>
<dbReference type="Pfam" id="PF05194">
    <property type="entry name" value="UreE_C"/>
    <property type="match status" value="1"/>
</dbReference>
<dbReference type="Pfam" id="PF02814">
    <property type="entry name" value="UreE_N"/>
    <property type="match status" value="1"/>
</dbReference>
<dbReference type="PIRSF" id="PIRSF036402">
    <property type="entry name" value="Ureas_acces_UreE"/>
    <property type="match status" value="1"/>
</dbReference>
<dbReference type="SMART" id="SM00988">
    <property type="entry name" value="UreE_N"/>
    <property type="match status" value="1"/>
</dbReference>
<dbReference type="SUPFAM" id="SSF69737">
    <property type="entry name" value="Urease metallochaperone UreE, C-terminal domain"/>
    <property type="match status" value="1"/>
</dbReference>
<dbReference type="SUPFAM" id="SSF69287">
    <property type="entry name" value="Urease metallochaperone UreE, N-terminal domain"/>
    <property type="match status" value="1"/>
</dbReference>
<keyword id="KW-0143">Chaperone</keyword>
<keyword id="KW-0963">Cytoplasm</keyword>
<keyword id="KW-0533">Nickel</keyword>
<keyword id="KW-0996">Nickel insertion</keyword>
<keyword id="KW-1185">Reference proteome</keyword>
<comment type="function">
    <text evidence="1">Involved in urease metallocenter assembly. Binds nickel. Probably functions as a nickel donor during metallocenter assembly.</text>
</comment>
<comment type="subcellular location">
    <subcellularLocation>
        <location evidence="1">Cytoplasm</location>
    </subcellularLocation>
</comment>
<comment type="similarity">
    <text evidence="1">Belongs to the UreE family.</text>
</comment>
<reference key="1">
    <citation type="journal article" date="2001" name="DNA Res.">
        <title>Complete genomic sequence of the filamentous nitrogen-fixing cyanobacterium Anabaena sp. strain PCC 7120.</title>
        <authorList>
            <person name="Kaneko T."/>
            <person name="Nakamura Y."/>
            <person name="Wolk C.P."/>
            <person name="Kuritz T."/>
            <person name="Sasamoto S."/>
            <person name="Watanabe A."/>
            <person name="Iriguchi M."/>
            <person name="Ishikawa A."/>
            <person name="Kawashima K."/>
            <person name="Kimura T."/>
            <person name="Kishida Y."/>
            <person name="Kohara M."/>
            <person name="Matsumoto M."/>
            <person name="Matsuno A."/>
            <person name="Muraki A."/>
            <person name="Nakazaki N."/>
            <person name="Shimpo S."/>
            <person name="Sugimoto M."/>
            <person name="Takazawa M."/>
            <person name="Yamada M."/>
            <person name="Yasuda M."/>
            <person name="Tabata S."/>
        </authorList>
    </citation>
    <scope>NUCLEOTIDE SEQUENCE [LARGE SCALE GENOMIC DNA]</scope>
    <source>
        <strain>PCC 7120 / SAG 25.82 / UTEX 2576</strain>
    </source>
</reference>
<evidence type="ECO:0000255" key="1">
    <source>
        <dbReference type="HAMAP-Rule" id="MF_00822"/>
    </source>
</evidence>
<gene>
    <name evidence="1" type="primary">ureE</name>
    <name type="ordered locus">alr0733</name>
</gene>